<reference evidence="2" key="1">
    <citation type="journal article" date="2009" name="Rapid Commun. Mass Spectrom.">
        <title>The host-defence skin peptide profiles of Peron's Tree Frog Litoria peronii in winter and summer. Sequence determination by electrospray mass spectrometry and activities of the peptides.</title>
        <authorList>
            <person name="Bilusich D."/>
            <person name="Jackway R.J."/>
            <person name="Musgrave I.F."/>
            <person name="Tyler M.J."/>
            <person name="Bowie J.H."/>
        </authorList>
    </citation>
    <scope>PROTEIN SEQUENCE</scope>
    <scope>FUNCTION</scope>
    <scope>SUBCELLULAR LOCATION</scope>
    <scope>TISSUE SPECIFICITY</scope>
    <scope>MASS SPECTROMETRY</scope>
    <scope>PYROGLUTAMATE FORMATION AT GLN-1</scope>
    <scope>AMIDATION AT VAL-7</scope>
    <source>
        <tissue evidence="1">Skin secretion</tissue>
    </source>
</reference>
<protein>
    <recommendedName>
        <fullName>Peroniin-1.3</fullName>
    </recommendedName>
</protein>
<name>PE13_LITPE</name>
<organism>
    <name type="scientific">Litoria peronii</name>
    <name type="common">Emerald spotted tree frog</name>
    <name type="synonym">Hyla peronii</name>
    <dbReference type="NCBI Taxonomy" id="317363"/>
    <lineage>
        <taxon>Eukaryota</taxon>
        <taxon>Metazoa</taxon>
        <taxon>Chordata</taxon>
        <taxon>Craniata</taxon>
        <taxon>Vertebrata</taxon>
        <taxon>Euteleostomi</taxon>
        <taxon>Amphibia</taxon>
        <taxon>Batrachia</taxon>
        <taxon>Anura</taxon>
        <taxon>Neobatrachia</taxon>
        <taxon>Hyloidea</taxon>
        <taxon>Hylidae</taxon>
        <taxon>Pelodryadinae</taxon>
        <taxon>Litoria</taxon>
    </lineage>
</organism>
<comment type="function">
    <text evidence="1">Induces contraction of intestinal smooth muscle in isolated guinea pig ileum.</text>
</comment>
<comment type="subcellular location">
    <subcellularLocation>
        <location evidence="1">Secreted</location>
    </subcellularLocation>
</comment>
<comment type="tissue specificity">
    <text evidence="1">Expressed by the skin dorsal glands.</text>
</comment>
<comment type="mass spectrometry"/>
<comment type="similarity">
    <text evidence="2">Belongs to the frog skin active peptide (FSAP) family. Peroniin subfamily.</text>
</comment>
<evidence type="ECO:0000269" key="1">
    <source>
    </source>
</evidence>
<evidence type="ECO:0000305" key="2"/>
<feature type="peptide" id="PRO_0000394185" description="Peroniin-1.3">
    <location>
        <begin position="1"/>
        <end position="7"/>
    </location>
</feature>
<feature type="modified residue" description="Pyrrolidone carboxylic acid" evidence="1">
    <location>
        <position position="1"/>
    </location>
</feature>
<feature type="modified residue" description="Valine amide" evidence="1">
    <location>
        <position position="7"/>
    </location>
</feature>
<dbReference type="GO" id="GO:0005576">
    <property type="term" value="C:extracellular region"/>
    <property type="evidence" value="ECO:0000314"/>
    <property type="project" value="UniProtKB"/>
</dbReference>
<dbReference type="GO" id="GO:0006952">
    <property type="term" value="P:defense response"/>
    <property type="evidence" value="ECO:0007669"/>
    <property type="project" value="UniProtKB-KW"/>
</dbReference>
<dbReference type="GO" id="GO:0045987">
    <property type="term" value="P:positive regulation of smooth muscle contraction"/>
    <property type="evidence" value="ECO:0000314"/>
    <property type="project" value="UniProtKB"/>
</dbReference>
<sequence>QPWLPFV</sequence>
<keyword id="KW-0027">Amidation</keyword>
<keyword id="KW-0878">Amphibian defense peptide</keyword>
<keyword id="KW-0903">Direct protein sequencing</keyword>
<keyword id="KW-0873">Pyrrolidone carboxylic acid</keyword>
<keyword id="KW-0964">Secreted</keyword>
<accession>P86492</accession>
<proteinExistence type="evidence at protein level"/>